<dbReference type="EMBL" id="AE009442">
    <property type="protein sequence ID" value="AAO29219.1"/>
    <property type="molecule type" value="Genomic_DNA"/>
</dbReference>
<dbReference type="RefSeq" id="WP_004091048.1">
    <property type="nucleotide sequence ID" value="NC_004556.1"/>
</dbReference>
<dbReference type="SMR" id="Q87BS6"/>
<dbReference type="GeneID" id="93905189"/>
<dbReference type="KEGG" id="xft:PD_1372"/>
<dbReference type="HOGENOM" id="CLU_050019_0_0_6"/>
<dbReference type="Proteomes" id="UP000002516">
    <property type="component" value="Chromosome"/>
</dbReference>
<dbReference type="GO" id="GO:0003677">
    <property type="term" value="F:DNA binding"/>
    <property type="evidence" value="ECO:0007669"/>
    <property type="project" value="InterPro"/>
</dbReference>
<dbReference type="GO" id="GO:0045892">
    <property type="term" value="P:negative regulation of DNA-templated transcription"/>
    <property type="evidence" value="ECO:0007669"/>
    <property type="project" value="UniProtKB-UniRule"/>
</dbReference>
<dbReference type="Gene3D" id="3.30.450.40">
    <property type="match status" value="1"/>
</dbReference>
<dbReference type="Gene3D" id="3.30.390.60">
    <property type="entry name" value="Heat-inducible transcription repressor hrca homolog, domain 3"/>
    <property type="match status" value="1"/>
</dbReference>
<dbReference type="Gene3D" id="1.10.10.10">
    <property type="entry name" value="Winged helix-like DNA-binding domain superfamily/Winged helix DNA-binding domain"/>
    <property type="match status" value="1"/>
</dbReference>
<dbReference type="HAMAP" id="MF_00081">
    <property type="entry name" value="HrcA"/>
    <property type="match status" value="1"/>
</dbReference>
<dbReference type="InterPro" id="IPR029016">
    <property type="entry name" value="GAF-like_dom_sf"/>
</dbReference>
<dbReference type="InterPro" id="IPR002571">
    <property type="entry name" value="HrcA"/>
</dbReference>
<dbReference type="InterPro" id="IPR021153">
    <property type="entry name" value="HrcA_C"/>
</dbReference>
<dbReference type="InterPro" id="IPR036388">
    <property type="entry name" value="WH-like_DNA-bd_sf"/>
</dbReference>
<dbReference type="InterPro" id="IPR036390">
    <property type="entry name" value="WH_DNA-bd_sf"/>
</dbReference>
<dbReference type="InterPro" id="IPR005104">
    <property type="entry name" value="WHTH_HrcA_DNA-bd"/>
</dbReference>
<dbReference type="InterPro" id="IPR023120">
    <property type="entry name" value="WHTH_transcript_rep_HrcA_IDD"/>
</dbReference>
<dbReference type="NCBIfam" id="TIGR00331">
    <property type="entry name" value="hrcA"/>
    <property type="match status" value="1"/>
</dbReference>
<dbReference type="PANTHER" id="PTHR34824">
    <property type="entry name" value="HEAT-INDUCIBLE TRANSCRIPTION REPRESSOR HRCA"/>
    <property type="match status" value="1"/>
</dbReference>
<dbReference type="PANTHER" id="PTHR34824:SF1">
    <property type="entry name" value="HEAT-INDUCIBLE TRANSCRIPTION REPRESSOR HRCA"/>
    <property type="match status" value="1"/>
</dbReference>
<dbReference type="Pfam" id="PF01628">
    <property type="entry name" value="HrcA"/>
    <property type="match status" value="1"/>
</dbReference>
<dbReference type="Pfam" id="PF03444">
    <property type="entry name" value="HrcA_DNA-bdg"/>
    <property type="match status" value="1"/>
</dbReference>
<dbReference type="PIRSF" id="PIRSF005485">
    <property type="entry name" value="HrcA"/>
    <property type="match status" value="1"/>
</dbReference>
<dbReference type="SUPFAM" id="SSF55781">
    <property type="entry name" value="GAF domain-like"/>
    <property type="match status" value="1"/>
</dbReference>
<dbReference type="SUPFAM" id="SSF46785">
    <property type="entry name" value="Winged helix' DNA-binding domain"/>
    <property type="match status" value="1"/>
</dbReference>
<comment type="function">
    <text evidence="1">Negative regulator of class I heat shock genes (grpE-dnaK-dnaJ and groELS operons). Prevents heat-shock induction of these operons.</text>
</comment>
<comment type="similarity">
    <text evidence="1">Belongs to the HrcA family.</text>
</comment>
<proteinExistence type="inferred from homology"/>
<organism>
    <name type="scientific">Xylella fastidiosa (strain Temecula1 / ATCC 700964)</name>
    <dbReference type="NCBI Taxonomy" id="183190"/>
    <lineage>
        <taxon>Bacteria</taxon>
        <taxon>Pseudomonadati</taxon>
        <taxon>Pseudomonadota</taxon>
        <taxon>Gammaproteobacteria</taxon>
        <taxon>Lysobacterales</taxon>
        <taxon>Lysobacteraceae</taxon>
        <taxon>Xylella</taxon>
    </lineage>
</organism>
<keyword id="KW-1185">Reference proteome</keyword>
<keyword id="KW-0678">Repressor</keyword>
<keyword id="KW-0346">Stress response</keyword>
<keyword id="KW-0804">Transcription</keyword>
<keyword id="KW-0805">Transcription regulation</keyword>
<gene>
    <name evidence="1" type="primary">hrcA</name>
    <name type="ordered locus">PD_1372</name>
</gene>
<name>HRCA_XYLFT</name>
<reference key="1">
    <citation type="journal article" date="2003" name="J. Bacteriol.">
        <title>Comparative analyses of the complete genome sequences of Pierce's disease and citrus variegated chlorosis strains of Xylella fastidiosa.</title>
        <authorList>
            <person name="Van Sluys M.A."/>
            <person name="de Oliveira M.C."/>
            <person name="Monteiro-Vitorello C.B."/>
            <person name="Miyaki C.Y."/>
            <person name="Furlan L.R."/>
            <person name="Camargo L.E.A."/>
            <person name="da Silva A.C.R."/>
            <person name="Moon D.H."/>
            <person name="Takita M.A."/>
            <person name="Lemos E.G.M."/>
            <person name="Machado M.A."/>
            <person name="Ferro M.I.T."/>
            <person name="da Silva F.R."/>
            <person name="Goldman M.H.S."/>
            <person name="Goldman G.H."/>
            <person name="Lemos M.V.F."/>
            <person name="El-Dorry H."/>
            <person name="Tsai S.M."/>
            <person name="Carrer H."/>
            <person name="Carraro D.M."/>
            <person name="de Oliveira R.C."/>
            <person name="Nunes L.R."/>
            <person name="Siqueira W.J."/>
            <person name="Coutinho L.L."/>
            <person name="Kimura E.T."/>
            <person name="Ferro E.S."/>
            <person name="Harakava R."/>
            <person name="Kuramae E.E."/>
            <person name="Marino C.L."/>
            <person name="Giglioti E."/>
            <person name="Abreu I.L."/>
            <person name="Alves L.M.C."/>
            <person name="do Amaral A.M."/>
            <person name="Baia G.S."/>
            <person name="Blanco S.R."/>
            <person name="Brito M.S."/>
            <person name="Cannavan F.S."/>
            <person name="Celestino A.V."/>
            <person name="da Cunha A.F."/>
            <person name="Fenille R.C."/>
            <person name="Ferro J.A."/>
            <person name="Formighieri E.F."/>
            <person name="Kishi L.T."/>
            <person name="Leoni S.G."/>
            <person name="Oliveira A.R."/>
            <person name="Rosa V.E. Jr."/>
            <person name="Sassaki F.T."/>
            <person name="Sena J.A.D."/>
            <person name="de Souza A.A."/>
            <person name="Truffi D."/>
            <person name="Tsukumo F."/>
            <person name="Yanai G.M."/>
            <person name="Zaros L.G."/>
            <person name="Civerolo E.L."/>
            <person name="Simpson A.J.G."/>
            <person name="Almeida N.F. Jr."/>
            <person name="Setubal J.C."/>
            <person name="Kitajima J.P."/>
        </authorList>
    </citation>
    <scope>NUCLEOTIDE SEQUENCE [LARGE SCALE GENOMIC DNA]</scope>
    <source>
        <strain>Temecula1 / ATCC 700964</strain>
    </source>
</reference>
<sequence>MCASFSPTLDSRSRQLLRTLISCYIQNGEPIGSKTLAQQAGLDISPATIRNILADLEELGLLNSPHTSAGRVPTAHGYRMFVDSLVQMQPPSEDDIRRLRVEMTGGGTQTLLGSASEILSAMTHFVGVVSAPRREQFVFRHIDFVPLDARQIMAILIFADNEVQNRVIEPRRVYEPGELERVSNYLNAHFIGRTLADIRTTVLCELRKAKDEMEQLLAHSLDLASQMLVPNDSEDIVVTGQTRLMALQDLSDMDRLRELFEIFASKREILQLLERTIDAPGVRIFIGEETGMVSMEDISLVTAPYAAHGQVLGVLGVIGPKRMAYDRVIPLVQVVAQVLGTALEPPTMP</sequence>
<feature type="chain" id="PRO_0000182558" description="Heat-inducible transcription repressor HrcA">
    <location>
        <begin position="1"/>
        <end position="349"/>
    </location>
</feature>
<evidence type="ECO:0000255" key="1">
    <source>
        <dbReference type="HAMAP-Rule" id="MF_00081"/>
    </source>
</evidence>
<accession>Q87BS6</accession>
<protein>
    <recommendedName>
        <fullName evidence="1">Heat-inducible transcription repressor HrcA</fullName>
    </recommendedName>
</protein>